<feature type="chain" id="PRO_0000178211" description="dITP/XTP pyrophosphatase">
    <location>
        <begin position="1"/>
        <end position="203"/>
    </location>
</feature>
<feature type="active site" description="Proton acceptor" evidence="1">
    <location>
        <position position="74"/>
    </location>
</feature>
<feature type="binding site" evidence="1">
    <location>
        <begin position="15"/>
        <end position="20"/>
    </location>
    <ligand>
        <name>substrate</name>
    </ligand>
</feature>
<feature type="binding site" evidence="1">
    <location>
        <position position="45"/>
    </location>
    <ligand>
        <name>Mg(2+)</name>
        <dbReference type="ChEBI" id="CHEBI:18420"/>
    </ligand>
</feature>
<feature type="binding site" evidence="1">
    <location>
        <position position="74"/>
    </location>
    <ligand>
        <name>Mg(2+)</name>
        <dbReference type="ChEBI" id="CHEBI:18420"/>
    </ligand>
</feature>
<feature type="binding site" evidence="1">
    <location>
        <position position="75"/>
    </location>
    <ligand>
        <name>substrate</name>
    </ligand>
</feature>
<feature type="binding site" evidence="1">
    <location>
        <begin position="153"/>
        <end position="156"/>
    </location>
    <ligand>
        <name>substrate</name>
    </ligand>
</feature>
<feature type="binding site" evidence="1">
    <location>
        <position position="176"/>
    </location>
    <ligand>
        <name>substrate</name>
    </ligand>
</feature>
<feature type="binding site" evidence="1">
    <location>
        <begin position="181"/>
        <end position="182"/>
    </location>
    <ligand>
        <name>substrate</name>
    </ligand>
</feature>
<keyword id="KW-0378">Hydrolase</keyword>
<keyword id="KW-0460">Magnesium</keyword>
<keyword id="KW-0479">Metal-binding</keyword>
<keyword id="KW-0546">Nucleotide metabolism</keyword>
<keyword id="KW-0547">Nucleotide-binding</keyword>
<keyword id="KW-1185">Reference proteome</keyword>
<proteinExistence type="inferred from homology"/>
<protein>
    <recommendedName>
        <fullName evidence="1">dITP/XTP pyrophosphatase</fullName>
        <ecNumber evidence="1">3.6.1.66</ecNumber>
    </recommendedName>
    <alternativeName>
        <fullName evidence="1">Non-canonical purine NTP pyrophosphatase</fullName>
    </alternativeName>
    <alternativeName>
        <fullName evidence="1">Non-standard purine NTP pyrophosphatase</fullName>
    </alternativeName>
    <alternativeName>
        <fullName evidence="1">Nucleoside-triphosphate diphosphatase</fullName>
    </alternativeName>
    <alternativeName>
        <fullName evidence="1">Nucleoside-triphosphate pyrophosphatase</fullName>
        <shortName evidence="1">NTPase</shortName>
    </alternativeName>
</protein>
<comment type="function">
    <text evidence="1">Pyrophosphatase that catalyzes the hydrolysis of nucleoside triphosphates to their monophosphate derivatives, with a high preference for the non-canonical purine nucleotides XTP (xanthosine triphosphate), dITP (deoxyinosine triphosphate) and ITP. Seems to function as a house-cleaning enzyme that removes non-canonical purine nucleotides from the nucleotide pool, thus preventing their incorporation into DNA/RNA and avoiding chromosomal lesions.</text>
</comment>
<comment type="catalytic activity">
    <reaction evidence="1">
        <text>XTP + H2O = XMP + diphosphate + H(+)</text>
        <dbReference type="Rhea" id="RHEA:28610"/>
        <dbReference type="ChEBI" id="CHEBI:15377"/>
        <dbReference type="ChEBI" id="CHEBI:15378"/>
        <dbReference type="ChEBI" id="CHEBI:33019"/>
        <dbReference type="ChEBI" id="CHEBI:57464"/>
        <dbReference type="ChEBI" id="CHEBI:61314"/>
        <dbReference type="EC" id="3.6.1.66"/>
    </reaction>
</comment>
<comment type="catalytic activity">
    <reaction evidence="1">
        <text>dITP + H2O = dIMP + diphosphate + H(+)</text>
        <dbReference type="Rhea" id="RHEA:28342"/>
        <dbReference type="ChEBI" id="CHEBI:15377"/>
        <dbReference type="ChEBI" id="CHEBI:15378"/>
        <dbReference type="ChEBI" id="CHEBI:33019"/>
        <dbReference type="ChEBI" id="CHEBI:61194"/>
        <dbReference type="ChEBI" id="CHEBI:61382"/>
        <dbReference type="EC" id="3.6.1.66"/>
    </reaction>
</comment>
<comment type="catalytic activity">
    <reaction evidence="1">
        <text>ITP + H2O = IMP + diphosphate + H(+)</text>
        <dbReference type="Rhea" id="RHEA:29399"/>
        <dbReference type="ChEBI" id="CHEBI:15377"/>
        <dbReference type="ChEBI" id="CHEBI:15378"/>
        <dbReference type="ChEBI" id="CHEBI:33019"/>
        <dbReference type="ChEBI" id="CHEBI:58053"/>
        <dbReference type="ChEBI" id="CHEBI:61402"/>
        <dbReference type="EC" id="3.6.1.66"/>
    </reaction>
</comment>
<comment type="cofactor">
    <cofactor evidence="1">
        <name>Mg(2+)</name>
        <dbReference type="ChEBI" id="CHEBI:18420"/>
    </cofactor>
    <text evidence="1">Binds 1 Mg(2+) ion per subunit.</text>
</comment>
<comment type="subunit">
    <text evidence="1">Homodimer.</text>
</comment>
<comment type="similarity">
    <text evidence="1">Belongs to the HAM1 NTPase family.</text>
</comment>
<dbReference type="EC" id="3.6.1.66" evidence="1"/>
<dbReference type="EMBL" id="BX548175">
    <property type="protein sequence ID" value="CAE22047.1"/>
    <property type="molecule type" value="Genomic_DNA"/>
</dbReference>
<dbReference type="SMR" id="Q7V4S3"/>
<dbReference type="KEGG" id="pmt:PMT_1872"/>
<dbReference type="eggNOG" id="COG0127">
    <property type="taxonomic scope" value="Bacteria"/>
</dbReference>
<dbReference type="HOGENOM" id="CLU_082080_0_2_3"/>
<dbReference type="OrthoDB" id="9807456at2"/>
<dbReference type="Proteomes" id="UP000001423">
    <property type="component" value="Chromosome"/>
</dbReference>
<dbReference type="GO" id="GO:0005829">
    <property type="term" value="C:cytosol"/>
    <property type="evidence" value="ECO:0007669"/>
    <property type="project" value="TreeGrafter"/>
</dbReference>
<dbReference type="GO" id="GO:0035870">
    <property type="term" value="F:dITP diphosphatase activity"/>
    <property type="evidence" value="ECO:0007669"/>
    <property type="project" value="RHEA"/>
</dbReference>
<dbReference type="GO" id="GO:0036220">
    <property type="term" value="F:ITP diphosphatase activity"/>
    <property type="evidence" value="ECO:0007669"/>
    <property type="project" value="UniProtKB-EC"/>
</dbReference>
<dbReference type="GO" id="GO:0046872">
    <property type="term" value="F:metal ion binding"/>
    <property type="evidence" value="ECO:0007669"/>
    <property type="project" value="UniProtKB-KW"/>
</dbReference>
<dbReference type="GO" id="GO:0000166">
    <property type="term" value="F:nucleotide binding"/>
    <property type="evidence" value="ECO:0007669"/>
    <property type="project" value="UniProtKB-KW"/>
</dbReference>
<dbReference type="GO" id="GO:0017111">
    <property type="term" value="F:ribonucleoside triphosphate phosphatase activity"/>
    <property type="evidence" value="ECO:0007669"/>
    <property type="project" value="InterPro"/>
</dbReference>
<dbReference type="GO" id="GO:0036222">
    <property type="term" value="F:XTP diphosphatase activity"/>
    <property type="evidence" value="ECO:0007669"/>
    <property type="project" value="RHEA"/>
</dbReference>
<dbReference type="GO" id="GO:0009117">
    <property type="term" value="P:nucleotide metabolic process"/>
    <property type="evidence" value="ECO:0007669"/>
    <property type="project" value="UniProtKB-KW"/>
</dbReference>
<dbReference type="GO" id="GO:0009146">
    <property type="term" value="P:purine nucleoside triphosphate catabolic process"/>
    <property type="evidence" value="ECO:0007669"/>
    <property type="project" value="UniProtKB-UniRule"/>
</dbReference>
<dbReference type="CDD" id="cd00515">
    <property type="entry name" value="HAM1"/>
    <property type="match status" value="1"/>
</dbReference>
<dbReference type="FunFam" id="3.90.950.10:FF:000001">
    <property type="entry name" value="dITP/XTP pyrophosphatase"/>
    <property type="match status" value="1"/>
</dbReference>
<dbReference type="Gene3D" id="3.90.950.10">
    <property type="match status" value="1"/>
</dbReference>
<dbReference type="HAMAP" id="MF_01405">
    <property type="entry name" value="Non_canon_purine_NTPase"/>
    <property type="match status" value="1"/>
</dbReference>
<dbReference type="InterPro" id="IPR020922">
    <property type="entry name" value="dITP/XTP_pyrophosphatase"/>
</dbReference>
<dbReference type="InterPro" id="IPR029001">
    <property type="entry name" value="ITPase-like_fam"/>
</dbReference>
<dbReference type="InterPro" id="IPR002637">
    <property type="entry name" value="RdgB/HAM1"/>
</dbReference>
<dbReference type="NCBIfam" id="TIGR00042">
    <property type="entry name" value="RdgB/HAM1 family non-canonical purine NTP pyrophosphatase"/>
    <property type="match status" value="1"/>
</dbReference>
<dbReference type="PANTHER" id="PTHR11067:SF9">
    <property type="entry name" value="INOSINE TRIPHOSPHATE PYROPHOSPHATASE"/>
    <property type="match status" value="1"/>
</dbReference>
<dbReference type="PANTHER" id="PTHR11067">
    <property type="entry name" value="INOSINE TRIPHOSPHATE PYROPHOSPHATASE/HAM1 PROTEIN"/>
    <property type="match status" value="1"/>
</dbReference>
<dbReference type="Pfam" id="PF01725">
    <property type="entry name" value="Ham1p_like"/>
    <property type="match status" value="1"/>
</dbReference>
<dbReference type="SUPFAM" id="SSF52972">
    <property type="entry name" value="ITPase-like"/>
    <property type="match status" value="1"/>
</dbReference>
<gene>
    <name type="ordered locus">PMT_1872</name>
</gene>
<reference key="1">
    <citation type="journal article" date="2003" name="Nature">
        <title>Genome divergence in two Prochlorococcus ecotypes reflects oceanic niche differentiation.</title>
        <authorList>
            <person name="Rocap G."/>
            <person name="Larimer F.W."/>
            <person name="Lamerdin J.E."/>
            <person name="Malfatti S."/>
            <person name="Chain P."/>
            <person name="Ahlgren N.A."/>
            <person name="Arellano A."/>
            <person name="Coleman M."/>
            <person name="Hauser L."/>
            <person name="Hess W.R."/>
            <person name="Johnson Z.I."/>
            <person name="Land M.L."/>
            <person name="Lindell D."/>
            <person name="Post A.F."/>
            <person name="Regala W."/>
            <person name="Shah M."/>
            <person name="Shaw S.L."/>
            <person name="Steglich C."/>
            <person name="Sullivan M.B."/>
            <person name="Ting C.S."/>
            <person name="Tolonen A."/>
            <person name="Webb E.A."/>
            <person name="Zinser E.R."/>
            <person name="Chisholm S.W."/>
        </authorList>
    </citation>
    <scope>NUCLEOTIDE SEQUENCE [LARGE SCALE GENOMIC DNA]</scope>
    <source>
        <strain>MIT 9313</strain>
    </source>
</reference>
<accession>Q7V4S3</accession>
<organism>
    <name type="scientific">Prochlorococcus marinus (strain MIT 9313)</name>
    <dbReference type="NCBI Taxonomy" id="74547"/>
    <lineage>
        <taxon>Bacteria</taxon>
        <taxon>Bacillati</taxon>
        <taxon>Cyanobacteriota</taxon>
        <taxon>Cyanophyceae</taxon>
        <taxon>Synechococcales</taxon>
        <taxon>Prochlorococcaceae</taxon>
        <taxon>Prochlorococcus</taxon>
    </lineage>
</organism>
<name>IXTPA_PROMM</name>
<sequence>MSSNELTERVLVIASGNAGKIREFRQLLAHLPLSVQAQPKDLAVEETGQTFAENARIKALTVAQATGQWALADDSGLSVEALAGAPGVYSARYAASDALRIERLLQELKGIDDRRAHFSAALCIASETNEVLLEVEGRCEGLITHAARGEKGFGYDPIFEVDATGTTFAEMTIEQKRQWSHRGCAFALLDPALQELLHKQNKP</sequence>
<evidence type="ECO:0000255" key="1">
    <source>
        <dbReference type="HAMAP-Rule" id="MF_01405"/>
    </source>
</evidence>